<accession>Q6PAL7</accession>
<accession>Q5U5N7</accession>
<accession>Q8C4Y6</accession>
<accession>Q8VCU7</accession>
<reference key="1">
    <citation type="journal article" date="2009" name="PLoS Biol.">
        <title>Lineage-specific biology revealed by a finished genome assembly of the mouse.</title>
        <authorList>
            <person name="Church D.M."/>
            <person name="Goodstadt L."/>
            <person name="Hillier L.W."/>
            <person name="Zody M.C."/>
            <person name="Goldstein S."/>
            <person name="She X."/>
            <person name="Bult C.J."/>
            <person name="Agarwala R."/>
            <person name="Cherry J.L."/>
            <person name="DiCuccio M."/>
            <person name="Hlavina W."/>
            <person name="Kapustin Y."/>
            <person name="Meric P."/>
            <person name="Maglott D."/>
            <person name="Birtle Z."/>
            <person name="Marques A.C."/>
            <person name="Graves T."/>
            <person name="Zhou S."/>
            <person name="Teague B."/>
            <person name="Potamousis K."/>
            <person name="Churas C."/>
            <person name="Place M."/>
            <person name="Herschleb J."/>
            <person name="Runnheim R."/>
            <person name="Forrest D."/>
            <person name="Amos-Landgraf J."/>
            <person name="Schwartz D.C."/>
            <person name="Cheng Z."/>
            <person name="Lindblad-Toh K."/>
            <person name="Eichler E.E."/>
            <person name="Ponting C.P."/>
        </authorList>
    </citation>
    <scope>NUCLEOTIDE SEQUENCE [LARGE SCALE GENOMIC DNA]</scope>
    <source>
        <strain>C57BL/6J</strain>
    </source>
</reference>
<reference key="2">
    <citation type="journal article" date="2004" name="Genome Res.">
        <title>The status, quality, and expansion of the NIH full-length cDNA project: the Mammalian Gene Collection (MGC).</title>
        <authorList>
            <consortium name="The MGC Project Team"/>
        </authorList>
    </citation>
    <scope>NUCLEOTIDE SEQUENCE [LARGE SCALE MRNA]</scope>
    <source>
        <strain>C57BL/6J</strain>
        <strain>FVB/N</strain>
        <tissue>Brain</tissue>
        <tissue>Mammary tumor</tissue>
        <tissue>Salivary gland</tissue>
    </source>
</reference>
<reference key="3">
    <citation type="journal article" date="2005" name="Science">
        <title>The transcriptional landscape of the mammalian genome.</title>
        <authorList>
            <person name="Carninci P."/>
            <person name="Kasukawa T."/>
            <person name="Katayama S."/>
            <person name="Gough J."/>
            <person name="Frith M.C."/>
            <person name="Maeda N."/>
            <person name="Oyama R."/>
            <person name="Ravasi T."/>
            <person name="Lenhard B."/>
            <person name="Wells C."/>
            <person name="Kodzius R."/>
            <person name="Shimokawa K."/>
            <person name="Bajic V.B."/>
            <person name="Brenner S.E."/>
            <person name="Batalov S."/>
            <person name="Forrest A.R."/>
            <person name="Zavolan M."/>
            <person name="Davis M.J."/>
            <person name="Wilming L.G."/>
            <person name="Aidinis V."/>
            <person name="Allen J.E."/>
            <person name="Ambesi-Impiombato A."/>
            <person name="Apweiler R."/>
            <person name="Aturaliya R.N."/>
            <person name="Bailey T.L."/>
            <person name="Bansal M."/>
            <person name="Baxter L."/>
            <person name="Beisel K.W."/>
            <person name="Bersano T."/>
            <person name="Bono H."/>
            <person name="Chalk A.M."/>
            <person name="Chiu K.P."/>
            <person name="Choudhary V."/>
            <person name="Christoffels A."/>
            <person name="Clutterbuck D.R."/>
            <person name="Crowe M.L."/>
            <person name="Dalla E."/>
            <person name="Dalrymple B.P."/>
            <person name="de Bono B."/>
            <person name="Della Gatta G."/>
            <person name="di Bernardo D."/>
            <person name="Down T."/>
            <person name="Engstrom P."/>
            <person name="Fagiolini M."/>
            <person name="Faulkner G."/>
            <person name="Fletcher C.F."/>
            <person name="Fukushima T."/>
            <person name="Furuno M."/>
            <person name="Futaki S."/>
            <person name="Gariboldi M."/>
            <person name="Georgii-Hemming P."/>
            <person name="Gingeras T.R."/>
            <person name="Gojobori T."/>
            <person name="Green R.E."/>
            <person name="Gustincich S."/>
            <person name="Harbers M."/>
            <person name="Hayashi Y."/>
            <person name="Hensch T.K."/>
            <person name="Hirokawa N."/>
            <person name="Hill D."/>
            <person name="Huminiecki L."/>
            <person name="Iacono M."/>
            <person name="Ikeo K."/>
            <person name="Iwama A."/>
            <person name="Ishikawa T."/>
            <person name="Jakt M."/>
            <person name="Kanapin A."/>
            <person name="Katoh M."/>
            <person name="Kawasawa Y."/>
            <person name="Kelso J."/>
            <person name="Kitamura H."/>
            <person name="Kitano H."/>
            <person name="Kollias G."/>
            <person name="Krishnan S.P."/>
            <person name="Kruger A."/>
            <person name="Kummerfeld S.K."/>
            <person name="Kurochkin I.V."/>
            <person name="Lareau L.F."/>
            <person name="Lazarevic D."/>
            <person name="Lipovich L."/>
            <person name="Liu J."/>
            <person name="Liuni S."/>
            <person name="McWilliam S."/>
            <person name="Madan Babu M."/>
            <person name="Madera M."/>
            <person name="Marchionni L."/>
            <person name="Matsuda H."/>
            <person name="Matsuzawa S."/>
            <person name="Miki H."/>
            <person name="Mignone F."/>
            <person name="Miyake S."/>
            <person name="Morris K."/>
            <person name="Mottagui-Tabar S."/>
            <person name="Mulder N."/>
            <person name="Nakano N."/>
            <person name="Nakauchi H."/>
            <person name="Ng P."/>
            <person name="Nilsson R."/>
            <person name="Nishiguchi S."/>
            <person name="Nishikawa S."/>
            <person name="Nori F."/>
            <person name="Ohara O."/>
            <person name="Okazaki Y."/>
            <person name="Orlando V."/>
            <person name="Pang K.C."/>
            <person name="Pavan W.J."/>
            <person name="Pavesi G."/>
            <person name="Pesole G."/>
            <person name="Petrovsky N."/>
            <person name="Piazza S."/>
            <person name="Reed J."/>
            <person name="Reid J.F."/>
            <person name="Ring B.Z."/>
            <person name="Ringwald M."/>
            <person name="Rost B."/>
            <person name="Ruan Y."/>
            <person name="Salzberg S.L."/>
            <person name="Sandelin A."/>
            <person name="Schneider C."/>
            <person name="Schoenbach C."/>
            <person name="Sekiguchi K."/>
            <person name="Semple C.A."/>
            <person name="Seno S."/>
            <person name="Sessa L."/>
            <person name="Sheng Y."/>
            <person name="Shibata Y."/>
            <person name="Shimada H."/>
            <person name="Shimada K."/>
            <person name="Silva D."/>
            <person name="Sinclair B."/>
            <person name="Sperling S."/>
            <person name="Stupka E."/>
            <person name="Sugiura K."/>
            <person name="Sultana R."/>
            <person name="Takenaka Y."/>
            <person name="Taki K."/>
            <person name="Tammoja K."/>
            <person name="Tan S.L."/>
            <person name="Tang S."/>
            <person name="Taylor M.S."/>
            <person name="Tegner J."/>
            <person name="Teichmann S.A."/>
            <person name="Ueda H.R."/>
            <person name="van Nimwegen E."/>
            <person name="Verardo R."/>
            <person name="Wei C.L."/>
            <person name="Yagi K."/>
            <person name="Yamanishi H."/>
            <person name="Zabarovsky E."/>
            <person name="Zhu S."/>
            <person name="Zimmer A."/>
            <person name="Hide W."/>
            <person name="Bult C."/>
            <person name="Grimmond S.M."/>
            <person name="Teasdale R.D."/>
            <person name="Liu E.T."/>
            <person name="Brusic V."/>
            <person name="Quackenbush J."/>
            <person name="Wahlestedt C."/>
            <person name="Mattick J.S."/>
            <person name="Hume D.A."/>
            <person name="Kai C."/>
            <person name="Sasaki D."/>
            <person name="Tomaru Y."/>
            <person name="Fukuda S."/>
            <person name="Kanamori-Katayama M."/>
            <person name="Suzuki M."/>
            <person name="Aoki J."/>
            <person name="Arakawa T."/>
            <person name="Iida J."/>
            <person name="Imamura K."/>
            <person name="Itoh M."/>
            <person name="Kato T."/>
            <person name="Kawaji H."/>
            <person name="Kawagashira N."/>
            <person name="Kawashima T."/>
            <person name="Kojima M."/>
            <person name="Kondo S."/>
            <person name="Konno H."/>
            <person name="Nakano K."/>
            <person name="Ninomiya N."/>
            <person name="Nishio T."/>
            <person name="Okada M."/>
            <person name="Plessy C."/>
            <person name="Shibata K."/>
            <person name="Shiraki T."/>
            <person name="Suzuki S."/>
            <person name="Tagami M."/>
            <person name="Waki K."/>
            <person name="Watahiki A."/>
            <person name="Okamura-Oho Y."/>
            <person name="Suzuki H."/>
            <person name="Kawai J."/>
            <person name="Hayashizaki Y."/>
        </authorList>
    </citation>
    <scope>NUCLEOTIDE SEQUENCE [LARGE SCALE MRNA] OF 1457-1594</scope>
    <source>
        <strain>C57BL/6J</strain>
        <tissue>Cerebellum</tissue>
    </source>
</reference>
<reference key="4">
    <citation type="journal article" date="2007" name="Science">
        <title>ATM and ATR substrate analysis reveals extensive protein networks responsive to DNA damage.</title>
        <authorList>
            <person name="Matsuoka S."/>
            <person name="Ballif B.A."/>
            <person name="Smogorzewska A."/>
            <person name="McDonald E.R. III"/>
            <person name="Hurov K.E."/>
            <person name="Luo J."/>
            <person name="Bakalarski C.E."/>
            <person name="Zhao Z."/>
            <person name="Solimini N."/>
            <person name="Lerenthal Y."/>
            <person name="Shiloh Y."/>
            <person name="Gygi S.P."/>
            <person name="Elledge S.J."/>
        </authorList>
    </citation>
    <scope>PHOSPHORYLATION [LARGE SCALE ANALYSIS] AT SER-825</scope>
    <scope>IDENTIFICATION BY MASS SPECTROMETRY [LARGE SCALE ANALYSIS]</scope>
    <source>
        <tissue>Embryonic fibroblast</tissue>
    </source>
</reference>
<reference key="5">
    <citation type="journal article" date="2010" name="Cell">
        <title>A tissue-specific atlas of mouse protein phosphorylation and expression.</title>
        <authorList>
            <person name="Huttlin E.L."/>
            <person name="Jedrychowski M.P."/>
            <person name="Elias J.E."/>
            <person name="Goswami T."/>
            <person name="Rad R."/>
            <person name="Beausoleil S.A."/>
            <person name="Villen J."/>
            <person name="Haas W."/>
            <person name="Sowa M.E."/>
            <person name="Gygi S.P."/>
        </authorList>
    </citation>
    <scope>PHOSPHORYLATION [LARGE SCALE ANALYSIS] AT SER-842; SER-892; SER-1180; SER-1315; SER-1317; SER-1392; THR-1394; SER-1396 AND SER-1540</scope>
    <scope>IDENTIFICATION BY MASS SPECTROMETRY [LARGE SCALE ANALYSIS]</scope>
    <source>
        <tissue>Brain</tissue>
        <tissue>Brown adipose tissue</tissue>
        <tissue>Heart</tissue>
        <tissue>Kidney</tissue>
        <tissue>Lung</tissue>
        <tissue>Spleen</tissue>
        <tissue>Testis</tissue>
    </source>
</reference>
<reference key="6">
    <citation type="journal article" date="2013" name="Mol. Cell">
        <title>SIRT5-mediated lysine desuccinylation impacts diverse metabolic pathways.</title>
        <authorList>
            <person name="Park J."/>
            <person name="Chen Y."/>
            <person name="Tishkoff D.X."/>
            <person name="Peng C."/>
            <person name="Tan M."/>
            <person name="Dai L."/>
            <person name="Xie Z."/>
            <person name="Zhang Y."/>
            <person name="Zwaans B.M."/>
            <person name="Skinner M.E."/>
            <person name="Lombard D.B."/>
            <person name="Zhao Y."/>
        </authorList>
    </citation>
    <scope>ACETYLATION [LARGE SCALE ANALYSIS] AT LYS-79</scope>
    <scope>IDENTIFICATION BY MASS SPECTROMETRY [LARGE SCALE ANALYSIS]</scope>
    <source>
        <tissue>Embryonic fibroblast</tissue>
    </source>
</reference>
<reference key="7">
    <citation type="journal article" date="2022" name="Nature">
        <title>Gibbin mesodermal regulation patterns epithelial development.</title>
        <authorList>
            <person name="Collier A."/>
            <person name="Liu A."/>
            <person name="Torkelson J."/>
            <person name="Pattison J."/>
            <person name="Gaddam S."/>
            <person name="Zhen H."/>
            <person name="Patel T."/>
            <person name="McCarthy K."/>
            <person name="Ghanim H."/>
            <person name="Oro A.E."/>
        </authorList>
    </citation>
    <scope>FUNCTION</scope>
    <scope>DISRUPTION PHENOTYPE</scope>
</reference>
<feature type="chain" id="PRO_0000313825" description="Transcription factor Gibbin">
    <location>
        <begin position="1"/>
        <end position="1594"/>
    </location>
</feature>
<feature type="DNA-binding region" description="A.T hook 1">
    <location>
        <begin position="395"/>
        <end position="407"/>
    </location>
</feature>
<feature type="DNA-binding region" description="A.T hook 2">
    <location>
        <begin position="541"/>
        <end position="553"/>
    </location>
</feature>
<feature type="region of interest" description="Disordered" evidence="2">
    <location>
        <begin position="19"/>
        <end position="111"/>
    </location>
</feature>
<feature type="region of interest" description="Disordered" evidence="2">
    <location>
        <begin position="149"/>
        <end position="241"/>
    </location>
</feature>
<feature type="region of interest" description="Disordered" evidence="2">
    <location>
        <begin position="256"/>
        <end position="307"/>
    </location>
</feature>
<feature type="region of interest" description="Disordered" evidence="2">
    <location>
        <begin position="367"/>
        <end position="464"/>
    </location>
</feature>
<feature type="region of interest" description="Disordered" evidence="2">
    <location>
        <begin position="578"/>
        <end position="604"/>
    </location>
</feature>
<feature type="region of interest" description="Disordered" evidence="2">
    <location>
        <begin position="714"/>
        <end position="789"/>
    </location>
</feature>
<feature type="region of interest" description="Disordered" evidence="2">
    <location>
        <begin position="942"/>
        <end position="967"/>
    </location>
</feature>
<feature type="region of interest" description="Disordered" evidence="2">
    <location>
        <begin position="1152"/>
        <end position="1191"/>
    </location>
</feature>
<feature type="region of interest" description="Disordered" evidence="2">
    <location>
        <begin position="1245"/>
        <end position="1306"/>
    </location>
</feature>
<feature type="region of interest" description="Disordered" evidence="2">
    <location>
        <begin position="1495"/>
        <end position="1525"/>
    </location>
</feature>
<feature type="compositionally biased region" description="Pro residues" evidence="2">
    <location>
        <begin position="30"/>
        <end position="47"/>
    </location>
</feature>
<feature type="compositionally biased region" description="Polar residues" evidence="2">
    <location>
        <begin position="165"/>
        <end position="177"/>
    </location>
</feature>
<feature type="compositionally biased region" description="Basic and acidic residues" evidence="2">
    <location>
        <begin position="178"/>
        <end position="193"/>
    </location>
</feature>
<feature type="compositionally biased region" description="Acidic residues" evidence="2">
    <location>
        <begin position="228"/>
        <end position="240"/>
    </location>
</feature>
<feature type="compositionally biased region" description="Low complexity" evidence="2">
    <location>
        <begin position="272"/>
        <end position="303"/>
    </location>
</feature>
<feature type="compositionally biased region" description="Basic residues" evidence="2">
    <location>
        <begin position="391"/>
        <end position="401"/>
    </location>
</feature>
<feature type="compositionally biased region" description="Pro residues" evidence="2">
    <location>
        <begin position="427"/>
        <end position="447"/>
    </location>
</feature>
<feature type="compositionally biased region" description="Basic residues" evidence="2">
    <location>
        <begin position="734"/>
        <end position="743"/>
    </location>
</feature>
<feature type="compositionally biased region" description="Low complexity" evidence="2">
    <location>
        <begin position="1153"/>
        <end position="1168"/>
    </location>
</feature>
<feature type="compositionally biased region" description="Low complexity" evidence="2">
    <location>
        <begin position="1180"/>
        <end position="1191"/>
    </location>
</feature>
<feature type="compositionally biased region" description="Low complexity" evidence="2">
    <location>
        <begin position="1245"/>
        <end position="1264"/>
    </location>
</feature>
<feature type="modified residue" description="N6-acetyllysine" evidence="9">
    <location>
        <position position="79"/>
    </location>
</feature>
<feature type="modified residue" description="Phosphoserine" evidence="1">
    <location>
        <position position="267"/>
    </location>
</feature>
<feature type="modified residue" description="Phosphoserine" evidence="1">
    <location>
        <position position="593"/>
    </location>
</feature>
<feature type="modified residue" description="Phosphoserine" evidence="7">
    <location>
        <position position="825"/>
    </location>
</feature>
<feature type="modified residue" description="Phosphoserine" evidence="8">
    <location>
        <position position="842"/>
    </location>
</feature>
<feature type="modified residue" description="Omega-N-methylarginine" evidence="1">
    <location>
        <position position="887"/>
    </location>
</feature>
<feature type="modified residue" description="Phosphoserine" evidence="8">
    <location>
        <position position="892"/>
    </location>
</feature>
<feature type="modified residue" description="Phosphoserine" evidence="1">
    <location>
        <position position="1060"/>
    </location>
</feature>
<feature type="modified residue" description="Phosphoserine" evidence="8">
    <location>
        <position position="1180"/>
    </location>
</feature>
<feature type="modified residue" description="Phosphoserine" evidence="8">
    <location>
        <position position="1315"/>
    </location>
</feature>
<feature type="modified residue" description="Phosphoserine" evidence="8">
    <location>
        <position position="1317"/>
    </location>
</feature>
<feature type="modified residue" description="Phosphoserine" evidence="8">
    <location>
        <position position="1392"/>
    </location>
</feature>
<feature type="modified residue" description="Phosphothreonine" evidence="8">
    <location>
        <position position="1394"/>
    </location>
</feature>
<feature type="modified residue" description="Phosphoserine" evidence="8">
    <location>
        <position position="1396"/>
    </location>
</feature>
<feature type="modified residue" description="Phosphoserine" evidence="1">
    <location>
        <position position="1498"/>
    </location>
</feature>
<feature type="modified residue" description="Phosphoserine" evidence="8">
    <location>
        <position position="1540"/>
    </location>
</feature>
<feature type="cross-link" description="Glycyl lysine isopeptide (Lys-Gly) (interchain with G-Cter in SUMO2)" evidence="1">
    <location>
        <position position="606"/>
    </location>
</feature>
<feature type="cross-link" description="Glycyl lysine isopeptide (Lys-Gly) (interchain with G-Cter in SUMO2)" evidence="1">
    <location>
        <position position="1402"/>
    </location>
</feature>
<feature type="sequence conflict" description="In Ref. 2; AAH42621." evidence="5" ref="2">
    <original>L</original>
    <variation>LP</variation>
    <location>
        <position position="431"/>
    </location>
</feature>
<name>AHDC1_MOUSE</name>
<protein>
    <recommendedName>
        <fullName evidence="4">Transcription factor Gibbin</fullName>
    </recommendedName>
    <alternativeName>
        <fullName evidence="5">AT-hook DNA-binding motif-containing protein 1</fullName>
    </alternativeName>
</protein>
<keyword id="KW-0007">Acetylation</keyword>
<keyword id="KW-0010">Activator</keyword>
<keyword id="KW-0158">Chromosome</keyword>
<keyword id="KW-0217">Developmental protein</keyword>
<keyword id="KW-0221">Differentiation</keyword>
<keyword id="KW-0238">DNA-binding</keyword>
<keyword id="KW-1017">Isopeptide bond</keyword>
<keyword id="KW-0488">Methylation</keyword>
<keyword id="KW-0539">Nucleus</keyword>
<keyword id="KW-0597">Phosphoprotein</keyword>
<keyword id="KW-1185">Reference proteome</keyword>
<keyword id="KW-0677">Repeat</keyword>
<keyword id="KW-0804">Transcription</keyword>
<keyword id="KW-0805">Transcription regulation</keyword>
<keyword id="KW-0832">Ubl conjugation</keyword>
<comment type="function">
    <text evidence="1 3">Transcription factor required for the proper patterning of the epidermis, which plays a key role in early epithelial morphogenesis (PubMed:35585237). Directly binds promoter and enhancer regions and acts by maintaining local enhancer-promoter chromatin architecture (By similarity). Interacts with many sequence-specific zinc-finger transcription factors and methyl-CpG-binding proteins to regulate the expression of mesoderm genes that wire surface ectoderm stratification (By similarity).</text>
</comment>
<comment type="subcellular location">
    <subcellularLocation>
        <location evidence="1">Nucleus</location>
    </subcellularLocation>
    <subcellularLocation>
        <location evidence="1">Chromosome</location>
    </subcellularLocation>
    <text evidence="1">Associates with promoter and enhancer regions.</text>
</comment>
<comment type="disruption phenotype">
    <text evidence="3">Lethality; mice do not survive past birth (PubMed:35585237). Mutant mice show developmental patterning defects affecting craniofacial structure, abdominal wall closure and epidermal stratification (PubMed:35585237).</text>
</comment>
<comment type="sequence caution" evidence="5">
    <conflict type="erroneous initiation">
        <sequence resource="EMBL-CDS" id="AAH19130"/>
    </conflict>
</comment>
<gene>
    <name evidence="4 6" type="primary">Ahdc1</name>
</gene>
<sequence length="1594" mass="168081">MRVKPQGLVVTSSAVCSSPDYLREPKYYPGGPPTPRPLLPTRPPASPPDKAFSTHTFSENPRPPPRRDPSSRRPPVLAKGDDLLPPRAARPVSQAHCPSPAPDNSSLRHWDNGRVNLRPVVQLIDIMKDLTRLSQDLQHSGVHLDCGGLRLSRPPAPPPGDLQYSFFSSPSLANSIRSPEERANPHTKSERPSHPLYEPEPEPRDSPQPGQGHGPGAAATATGLPPEPEPDGPDYSELADADILSELASLTCPEAQLLEAQALEPPSPQPEPQLLDPQPRFLDPQALEPLGEGLELPPLQPLADPLGLPSLTLQALDTLPDSLESQLLDPQALDPLPKLLDVPGRRLEPQQSLGHCQLAEPLRLDLCSPHGPPGPEGHPKYALRRTDRPKILCRRRKAGRGRKADSGPEGRLLPLPMPTGLAAALAEPPPLPPPPPPTLSGPGPVPELEPESSQTPMVPTRKGKCRGVRRMVVKMAKIPVSLGRRNKTTYKVSSLSSSLSVEGKELGLRVSSEPTPLLKMKNNGRNVVVVFPPGEMPIILKRKRGRPPKNLLLGPGKPKEPTVVAAEAATVTAATMAMPEVKKRRRRKQKLASPQPSYAADANDSKAEYSDVLAKLAFLNRQSQCAGRCSPPRCWTPSEPESVHQAPDTQSISQFLHRVQGFRRRGGKTGGFGGRGGGHAAKAARCSFSDFFEGIGKKKKVVAVAAPGLVGPGLTELGHPRKRGRGEVDAVTGKPKRKRRSRKNGTLFPEQVPSGPGFGEAGAEWVGDKGGGWAPHHGHPGGQAGRNCGFQGTEARAFASTGLESGASGRGSYYAGAPSGQTELSQERQNLFTGYFRSLLDSDDSSDLLDFALSASRPESRKASGTYAGPPSSALPAQRGLATFPSRGAKASPVAVGSSGAGADPSFQPVLPSRQTFPPGRATSYGITPATSDCRAAETFPKLAPPPSAVARSPTTHPPANTYPPQYGGYGAGQSVFASAKPFSGQDCANSKDCSFAYGSGNSLPASPSSAHSAGYAPPPTGGPCLPPSKASFFNSSEGGPFSGSAPTPLRCDSRASTVSPGGYMVPKGTTASAASVASSSSSSFQPSPENCRQFVGASQWPFRQGYGGLDWASEAFSQLYNPNFDCHGSEPNVILDISNYTPQKVKQQTAVSETFSESSSDSTQFSQPVGGGGFRRANSEASSSEGQSSLSSLEKLMMDWNEASSAPGYNWNQSVLFQSSSKPGRGRRKKVDLFEASHLGFSTSTSATASGYPSKRSTGPRQPRGGRGSGACSAKKERGGTAAKAKFIPKPQPVNPLFQDSPDLGLDYYSGDSSMSPLPSQSRAFGVGERDPCDFMGPYSMNPSTPSDGTFGQGFHCDSPSLGAAELDGKHFPPLAHPPTVFDAGLQKAYSPTCSPTLGFKEELRPPPSKLTACEPLKHGLQGASLSHAAQAHLSCRDLPLGQPHYDSPSCKGTAYWYPPGSAARSPPYEGKVGSGLLADFLGRTEAVCLSAPHLASPPATPKADKEPLEMARPPGPPRGPAAATAGYGCPLLSDLTLSPVPRDSLLPLQDTAYRYPGFMPQAHPGLGGGPKSGFLGPMAEPHPEDTFTVTSL</sequence>
<evidence type="ECO:0000250" key="1">
    <source>
        <dbReference type="UniProtKB" id="Q5TGY3"/>
    </source>
</evidence>
<evidence type="ECO:0000256" key="2">
    <source>
        <dbReference type="SAM" id="MobiDB-lite"/>
    </source>
</evidence>
<evidence type="ECO:0000269" key="3">
    <source>
    </source>
</evidence>
<evidence type="ECO:0000303" key="4">
    <source>
    </source>
</evidence>
<evidence type="ECO:0000305" key="5"/>
<evidence type="ECO:0000312" key="6">
    <source>
        <dbReference type="MGI" id="MGI:2444218"/>
    </source>
</evidence>
<evidence type="ECO:0007744" key="7">
    <source>
    </source>
</evidence>
<evidence type="ECO:0007744" key="8">
    <source>
    </source>
</evidence>
<evidence type="ECO:0007744" key="9">
    <source>
    </source>
</evidence>
<proteinExistence type="evidence at protein level"/>
<organism>
    <name type="scientific">Mus musculus</name>
    <name type="common">Mouse</name>
    <dbReference type="NCBI Taxonomy" id="10090"/>
    <lineage>
        <taxon>Eukaryota</taxon>
        <taxon>Metazoa</taxon>
        <taxon>Chordata</taxon>
        <taxon>Craniata</taxon>
        <taxon>Vertebrata</taxon>
        <taxon>Euteleostomi</taxon>
        <taxon>Mammalia</taxon>
        <taxon>Eutheria</taxon>
        <taxon>Euarchontoglires</taxon>
        <taxon>Glires</taxon>
        <taxon>Rodentia</taxon>
        <taxon>Myomorpha</taxon>
        <taxon>Muroidea</taxon>
        <taxon>Muridae</taxon>
        <taxon>Murinae</taxon>
        <taxon>Mus</taxon>
        <taxon>Mus</taxon>
    </lineage>
</organism>
<dbReference type="EMBL" id="AL627184">
    <property type="status" value="NOT_ANNOTATED_CDS"/>
    <property type="molecule type" value="Genomic_DNA"/>
</dbReference>
<dbReference type="EMBL" id="BC019130">
    <property type="protein sequence ID" value="AAH19130.1"/>
    <property type="status" value="ALT_INIT"/>
    <property type="molecule type" value="mRNA"/>
</dbReference>
<dbReference type="EMBL" id="BC042621">
    <property type="protein sequence ID" value="AAH42621.1"/>
    <property type="molecule type" value="mRNA"/>
</dbReference>
<dbReference type="EMBL" id="BC060231">
    <property type="protein sequence ID" value="AAH60231.1"/>
    <property type="molecule type" value="mRNA"/>
</dbReference>
<dbReference type="EMBL" id="AK080410">
    <property type="protein sequence ID" value="BAC37907.1"/>
    <property type="molecule type" value="mRNA"/>
</dbReference>
<dbReference type="CCDS" id="CCDS38900.1"/>
<dbReference type="RefSeq" id="NP_001391059.1">
    <property type="nucleotide sequence ID" value="NM_001404130.1"/>
</dbReference>
<dbReference type="RefSeq" id="NP_001391060.1">
    <property type="nucleotide sequence ID" value="NM_001404131.1"/>
</dbReference>
<dbReference type="RefSeq" id="NP_001391061.1">
    <property type="nucleotide sequence ID" value="NM_001404132.1"/>
</dbReference>
<dbReference type="RefSeq" id="NP_001391062.1">
    <property type="nucleotide sequence ID" value="NM_001404133.1"/>
</dbReference>
<dbReference type="RefSeq" id="NP_666267.3">
    <property type="nucleotide sequence ID" value="NM_146155.3"/>
</dbReference>
<dbReference type="RefSeq" id="XP_006538797.1">
    <property type="nucleotide sequence ID" value="XM_006538734.2"/>
</dbReference>
<dbReference type="RefSeq" id="XP_006538799.1">
    <property type="nucleotide sequence ID" value="XM_006538736.4"/>
</dbReference>
<dbReference type="RefSeq" id="XP_006538800.1">
    <property type="nucleotide sequence ID" value="XM_006538737.1"/>
</dbReference>
<dbReference type="RefSeq" id="XP_006538801.1">
    <property type="nucleotide sequence ID" value="XM_006538738.3"/>
</dbReference>
<dbReference type="RefSeq" id="XP_006538802.1">
    <property type="nucleotide sequence ID" value="XM_006538739.2"/>
</dbReference>
<dbReference type="RefSeq" id="XP_006538803.1">
    <property type="nucleotide sequence ID" value="XM_006538740.1"/>
</dbReference>
<dbReference type="RefSeq" id="XP_006538804.1">
    <property type="nucleotide sequence ID" value="XM_006538741.3"/>
</dbReference>
<dbReference type="RefSeq" id="XP_006538805.1">
    <property type="nucleotide sequence ID" value="XM_006538742.2"/>
</dbReference>
<dbReference type="RefSeq" id="XP_011248533.1">
    <property type="nucleotide sequence ID" value="XM_011250231.2"/>
</dbReference>
<dbReference type="RefSeq" id="XP_017175648.1">
    <property type="nucleotide sequence ID" value="XM_017320159.1"/>
</dbReference>
<dbReference type="RefSeq" id="XP_030109324.1">
    <property type="nucleotide sequence ID" value="XM_030253464.2"/>
</dbReference>
<dbReference type="RefSeq" id="XP_036019958.1">
    <property type="nucleotide sequence ID" value="XM_036164065.1"/>
</dbReference>
<dbReference type="BioGRID" id="231029">
    <property type="interactions" value="6"/>
</dbReference>
<dbReference type="FunCoup" id="Q6PAL7">
    <property type="interactions" value="537"/>
</dbReference>
<dbReference type="STRING" id="10090.ENSMUSP00000101536"/>
<dbReference type="GlyGen" id="Q6PAL7">
    <property type="glycosylation" value="9 sites, 1 O-linked glycan (7 sites)"/>
</dbReference>
<dbReference type="iPTMnet" id="Q6PAL7"/>
<dbReference type="PhosphoSitePlus" id="Q6PAL7"/>
<dbReference type="jPOST" id="Q6PAL7"/>
<dbReference type="PaxDb" id="10090-ENSMUSP00000101536"/>
<dbReference type="PeptideAtlas" id="Q6PAL7"/>
<dbReference type="ProteomicsDB" id="282045"/>
<dbReference type="Pumba" id="Q6PAL7"/>
<dbReference type="Antibodypedia" id="30793">
    <property type="antibodies" value="22 antibodies from 8 providers"/>
</dbReference>
<dbReference type="Ensembl" id="ENSMUST00000044521.14">
    <property type="protein sequence ID" value="ENSMUSP00000047113.8"/>
    <property type="gene ID" value="ENSMUSG00000037692.15"/>
</dbReference>
<dbReference type="Ensembl" id="ENSMUST00000105914.2">
    <property type="protein sequence ID" value="ENSMUSP00000101534.2"/>
    <property type="gene ID" value="ENSMUSG00000037692.15"/>
</dbReference>
<dbReference type="Ensembl" id="ENSMUST00000105915.8">
    <property type="protein sequence ID" value="ENSMUSP00000101535.2"/>
    <property type="gene ID" value="ENSMUSG00000037692.15"/>
</dbReference>
<dbReference type="Ensembl" id="ENSMUST00000105916.8">
    <property type="protein sequence ID" value="ENSMUSP00000101536.2"/>
    <property type="gene ID" value="ENSMUSG00000037692.15"/>
</dbReference>
<dbReference type="GeneID" id="230793"/>
<dbReference type="KEGG" id="mmu:230793"/>
<dbReference type="UCSC" id="uc008vcc.1">
    <property type="organism name" value="mouse"/>
</dbReference>
<dbReference type="AGR" id="MGI:2444218"/>
<dbReference type="CTD" id="27245"/>
<dbReference type="MGI" id="MGI:2444218">
    <property type="gene designation" value="Ahdc1"/>
</dbReference>
<dbReference type="VEuPathDB" id="HostDB:ENSMUSG00000037692"/>
<dbReference type="eggNOG" id="ENOG502QSFA">
    <property type="taxonomic scope" value="Eukaryota"/>
</dbReference>
<dbReference type="GeneTree" id="ENSGT00390000018883"/>
<dbReference type="HOGENOM" id="CLU_004578_0_0_1"/>
<dbReference type="InParanoid" id="Q6PAL7"/>
<dbReference type="OMA" id="TEWAGDK"/>
<dbReference type="OrthoDB" id="8950893at2759"/>
<dbReference type="PhylomeDB" id="Q6PAL7"/>
<dbReference type="TreeFam" id="TF332128"/>
<dbReference type="BioGRID-ORCS" id="230793">
    <property type="hits" value="3 hits in 76 CRISPR screens"/>
</dbReference>
<dbReference type="ChiTaRS" id="Ahdc1">
    <property type="organism name" value="mouse"/>
</dbReference>
<dbReference type="PRO" id="PR:Q6PAL7"/>
<dbReference type="Proteomes" id="UP000000589">
    <property type="component" value="Chromosome 4"/>
</dbReference>
<dbReference type="RNAct" id="Q6PAL7">
    <property type="molecule type" value="protein"/>
</dbReference>
<dbReference type="Bgee" id="ENSMUSG00000037692">
    <property type="expression patterns" value="Expressed in embryonic brain and 178 other cell types or tissues"/>
</dbReference>
<dbReference type="GO" id="GO:0005694">
    <property type="term" value="C:chromosome"/>
    <property type="evidence" value="ECO:0007669"/>
    <property type="project" value="UniProtKB-SubCell"/>
</dbReference>
<dbReference type="GO" id="GO:0005634">
    <property type="term" value="C:nucleus"/>
    <property type="evidence" value="ECO:0000250"/>
    <property type="project" value="UniProtKB"/>
</dbReference>
<dbReference type="GO" id="GO:0003700">
    <property type="term" value="F:DNA-binding transcription factor activity"/>
    <property type="evidence" value="ECO:0000250"/>
    <property type="project" value="UniProtKB"/>
</dbReference>
<dbReference type="GO" id="GO:0140585">
    <property type="term" value="F:promoter-enhancer loop anchoring activity"/>
    <property type="evidence" value="ECO:0000250"/>
    <property type="project" value="UniProtKB"/>
</dbReference>
<dbReference type="GO" id="GO:0030154">
    <property type="term" value="P:cell differentiation"/>
    <property type="evidence" value="ECO:0007669"/>
    <property type="project" value="UniProtKB-KW"/>
</dbReference>
<dbReference type="GO" id="GO:0001707">
    <property type="term" value="P:mesoderm formation"/>
    <property type="evidence" value="ECO:0000315"/>
    <property type="project" value="UniProtKB"/>
</dbReference>
<dbReference type="GO" id="GO:0043589">
    <property type="term" value="P:skin morphogenesis"/>
    <property type="evidence" value="ECO:0000315"/>
    <property type="project" value="UniProtKB"/>
</dbReference>
<dbReference type="InterPro" id="IPR039225">
    <property type="entry name" value="AHDC1"/>
</dbReference>
<dbReference type="InterPro" id="IPR032757">
    <property type="entry name" value="DUF4683"/>
</dbReference>
<dbReference type="PANTHER" id="PTHR15617">
    <property type="entry name" value="TRANSCRIPTION FACTOR GIBBIN"/>
    <property type="match status" value="1"/>
</dbReference>
<dbReference type="PANTHER" id="PTHR15617:SF1">
    <property type="entry name" value="TRANSCRIPTION FACTOR GIBBIN"/>
    <property type="match status" value="1"/>
</dbReference>
<dbReference type="Pfam" id="PF15735">
    <property type="entry name" value="DUF4683"/>
    <property type="match status" value="1"/>
</dbReference>